<protein>
    <recommendedName>
        <fullName evidence="1">Arginine--tRNA ligase</fullName>
        <ecNumber evidence="1">6.1.1.19</ecNumber>
    </recommendedName>
    <alternativeName>
        <fullName evidence="1">Arginyl-tRNA synthetase</fullName>
        <shortName evidence="1">ArgRS</shortName>
    </alternativeName>
</protein>
<dbReference type="EC" id="6.1.1.19" evidence="1"/>
<dbReference type="EMBL" id="BX571856">
    <property type="protein sequence ID" value="CAG39634.1"/>
    <property type="molecule type" value="Genomic_DNA"/>
</dbReference>
<dbReference type="RefSeq" id="WP_001021140.1">
    <property type="nucleotide sequence ID" value="NC_002952.2"/>
</dbReference>
<dbReference type="SMR" id="Q6GJ61"/>
<dbReference type="KEGG" id="sar:SAR0615"/>
<dbReference type="HOGENOM" id="CLU_006406_0_1_9"/>
<dbReference type="Proteomes" id="UP000000596">
    <property type="component" value="Chromosome"/>
</dbReference>
<dbReference type="GO" id="GO:0005737">
    <property type="term" value="C:cytoplasm"/>
    <property type="evidence" value="ECO:0007669"/>
    <property type="project" value="UniProtKB-SubCell"/>
</dbReference>
<dbReference type="GO" id="GO:0004814">
    <property type="term" value="F:arginine-tRNA ligase activity"/>
    <property type="evidence" value="ECO:0007669"/>
    <property type="project" value="UniProtKB-UniRule"/>
</dbReference>
<dbReference type="GO" id="GO:0005524">
    <property type="term" value="F:ATP binding"/>
    <property type="evidence" value="ECO:0007669"/>
    <property type="project" value="UniProtKB-UniRule"/>
</dbReference>
<dbReference type="GO" id="GO:0006420">
    <property type="term" value="P:arginyl-tRNA aminoacylation"/>
    <property type="evidence" value="ECO:0007669"/>
    <property type="project" value="UniProtKB-UniRule"/>
</dbReference>
<dbReference type="CDD" id="cd00671">
    <property type="entry name" value="ArgRS_core"/>
    <property type="match status" value="1"/>
</dbReference>
<dbReference type="FunFam" id="1.10.730.10:FF:000008">
    <property type="entry name" value="Arginine--tRNA ligase"/>
    <property type="match status" value="1"/>
</dbReference>
<dbReference type="FunFam" id="3.30.1360.70:FF:000003">
    <property type="entry name" value="Arginine--tRNA ligase"/>
    <property type="match status" value="1"/>
</dbReference>
<dbReference type="FunFam" id="3.40.50.620:FF:000062">
    <property type="entry name" value="Arginine--tRNA ligase"/>
    <property type="match status" value="1"/>
</dbReference>
<dbReference type="Gene3D" id="3.30.1360.70">
    <property type="entry name" value="Arginyl tRNA synthetase N-terminal domain"/>
    <property type="match status" value="1"/>
</dbReference>
<dbReference type="Gene3D" id="3.40.50.620">
    <property type="entry name" value="HUPs"/>
    <property type="match status" value="1"/>
</dbReference>
<dbReference type="Gene3D" id="1.10.730.10">
    <property type="entry name" value="Isoleucyl-tRNA Synthetase, Domain 1"/>
    <property type="match status" value="1"/>
</dbReference>
<dbReference type="HAMAP" id="MF_00123">
    <property type="entry name" value="Arg_tRNA_synth"/>
    <property type="match status" value="1"/>
</dbReference>
<dbReference type="InterPro" id="IPR001412">
    <property type="entry name" value="aa-tRNA-synth_I_CS"/>
</dbReference>
<dbReference type="InterPro" id="IPR001278">
    <property type="entry name" value="Arg-tRNA-ligase"/>
</dbReference>
<dbReference type="InterPro" id="IPR005148">
    <property type="entry name" value="Arg-tRNA-synth_N"/>
</dbReference>
<dbReference type="InterPro" id="IPR036695">
    <property type="entry name" value="Arg-tRNA-synth_N_sf"/>
</dbReference>
<dbReference type="InterPro" id="IPR035684">
    <property type="entry name" value="ArgRS_core"/>
</dbReference>
<dbReference type="InterPro" id="IPR008909">
    <property type="entry name" value="DALR_anticod-bd"/>
</dbReference>
<dbReference type="InterPro" id="IPR014729">
    <property type="entry name" value="Rossmann-like_a/b/a_fold"/>
</dbReference>
<dbReference type="InterPro" id="IPR009080">
    <property type="entry name" value="tRNAsynth_Ia_anticodon-bd"/>
</dbReference>
<dbReference type="NCBIfam" id="TIGR00456">
    <property type="entry name" value="argS"/>
    <property type="match status" value="1"/>
</dbReference>
<dbReference type="PANTHER" id="PTHR11956:SF5">
    <property type="entry name" value="ARGININE--TRNA LIGASE, CYTOPLASMIC"/>
    <property type="match status" value="1"/>
</dbReference>
<dbReference type="PANTHER" id="PTHR11956">
    <property type="entry name" value="ARGINYL-TRNA SYNTHETASE"/>
    <property type="match status" value="1"/>
</dbReference>
<dbReference type="Pfam" id="PF03485">
    <property type="entry name" value="Arg_tRNA_synt_N"/>
    <property type="match status" value="1"/>
</dbReference>
<dbReference type="Pfam" id="PF05746">
    <property type="entry name" value="DALR_1"/>
    <property type="match status" value="1"/>
</dbReference>
<dbReference type="Pfam" id="PF00750">
    <property type="entry name" value="tRNA-synt_1d"/>
    <property type="match status" value="1"/>
</dbReference>
<dbReference type="PRINTS" id="PR01038">
    <property type="entry name" value="TRNASYNTHARG"/>
</dbReference>
<dbReference type="SMART" id="SM01016">
    <property type="entry name" value="Arg_tRNA_synt_N"/>
    <property type="match status" value="1"/>
</dbReference>
<dbReference type="SMART" id="SM00836">
    <property type="entry name" value="DALR_1"/>
    <property type="match status" value="1"/>
</dbReference>
<dbReference type="SUPFAM" id="SSF47323">
    <property type="entry name" value="Anticodon-binding domain of a subclass of class I aminoacyl-tRNA synthetases"/>
    <property type="match status" value="1"/>
</dbReference>
<dbReference type="SUPFAM" id="SSF55190">
    <property type="entry name" value="Arginyl-tRNA synthetase (ArgRS), N-terminal 'additional' domain"/>
    <property type="match status" value="1"/>
</dbReference>
<dbReference type="SUPFAM" id="SSF52374">
    <property type="entry name" value="Nucleotidylyl transferase"/>
    <property type="match status" value="1"/>
</dbReference>
<dbReference type="PROSITE" id="PS00178">
    <property type="entry name" value="AA_TRNA_LIGASE_I"/>
    <property type="match status" value="1"/>
</dbReference>
<organism>
    <name type="scientific">Staphylococcus aureus (strain MRSA252)</name>
    <dbReference type="NCBI Taxonomy" id="282458"/>
    <lineage>
        <taxon>Bacteria</taxon>
        <taxon>Bacillati</taxon>
        <taxon>Bacillota</taxon>
        <taxon>Bacilli</taxon>
        <taxon>Bacillales</taxon>
        <taxon>Staphylococcaceae</taxon>
        <taxon>Staphylococcus</taxon>
    </lineage>
</organism>
<name>SYR_STAAR</name>
<sequence length="553" mass="62351">MNIIDQVKQTLVEEIAASINKAGLADEIPDIKIEVPKDTKNGDYATNIAMVLTKIAKRNPREIAQAIVDNLDTEKAHVKQIDIAGPGFINFYLDNQYLTAIIPEAIEKGDQFGHVNESKGQNVLLEYVSANPTGDLHIGHARNAAVGDALANILTAAGYNVTREYYINDAGNQITNLARSIETRFFEALGDNSYSMPEDGYNGKDIIEIGKDLAEKHPEIKDYSEEARLKEFRKLGVEYEMAKLKNDLAEFNTHFDNWFSETSLYEKGEILEVLAKMKELGYTYEADGATWLRTTDFKDDKDRVLIKNDGTYTYFLPDIAYHFDKVKRGNDILIDLFGADHHGYINRLKASLETFGVDSNRLEIQIMQMVRLMENGKEVKMSKRTGNAITLREIMDEVGVDAARYFLTMRSPDSHFDFDMELAKEQSQDNPVYYAQYAHARICSILKQAKEQGIEVAAANDFTTITNEKAIELLKKVADFEPTIESAAEHRSAHRITNYIQDLASHFHKFYNAEKVLTDDIEKTKAHVAMIEAVRITLKNALAMVGVSAPESM</sequence>
<keyword id="KW-0030">Aminoacyl-tRNA synthetase</keyword>
<keyword id="KW-0067">ATP-binding</keyword>
<keyword id="KW-0963">Cytoplasm</keyword>
<keyword id="KW-0436">Ligase</keyword>
<keyword id="KW-0547">Nucleotide-binding</keyword>
<keyword id="KW-0648">Protein biosynthesis</keyword>
<feature type="chain" id="PRO_0000151608" description="Arginine--tRNA ligase">
    <location>
        <begin position="1"/>
        <end position="553"/>
    </location>
</feature>
<feature type="short sequence motif" description="'HIGH' region">
    <location>
        <begin position="130"/>
        <end position="140"/>
    </location>
</feature>
<proteinExistence type="inferred from homology"/>
<comment type="catalytic activity">
    <reaction evidence="1">
        <text>tRNA(Arg) + L-arginine + ATP = L-arginyl-tRNA(Arg) + AMP + diphosphate</text>
        <dbReference type="Rhea" id="RHEA:20301"/>
        <dbReference type="Rhea" id="RHEA-COMP:9658"/>
        <dbReference type="Rhea" id="RHEA-COMP:9673"/>
        <dbReference type="ChEBI" id="CHEBI:30616"/>
        <dbReference type="ChEBI" id="CHEBI:32682"/>
        <dbReference type="ChEBI" id="CHEBI:33019"/>
        <dbReference type="ChEBI" id="CHEBI:78442"/>
        <dbReference type="ChEBI" id="CHEBI:78513"/>
        <dbReference type="ChEBI" id="CHEBI:456215"/>
        <dbReference type="EC" id="6.1.1.19"/>
    </reaction>
</comment>
<comment type="subunit">
    <text evidence="1">Monomer.</text>
</comment>
<comment type="subcellular location">
    <subcellularLocation>
        <location evidence="1">Cytoplasm</location>
    </subcellularLocation>
</comment>
<comment type="similarity">
    <text evidence="1">Belongs to the class-I aminoacyl-tRNA synthetase family.</text>
</comment>
<gene>
    <name evidence="1" type="primary">argS</name>
    <name type="ordered locus">SAR0615</name>
</gene>
<evidence type="ECO:0000255" key="1">
    <source>
        <dbReference type="HAMAP-Rule" id="MF_00123"/>
    </source>
</evidence>
<reference key="1">
    <citation type="journal article" date="2004" name="Proc. Natl. Acad. Sci. U.S.A.">
        <title>Complete genomes of two clinical Staphylococcus aureus strains: evidence for the rapid evolution of virulence and drug resistance.</title>
        <authorList>
            <person name="Holden M.T.G."/>
            <person name="Feil E.J."/>
            <person name="Lindsay J.A."/>
            <person name="Peacock S.J."/>
            <person name="Day N.P.J."/>
            <person name="Enright M.C."/>
            <person name="Foster T.J."/>
            <person name="Moore C.E."/>
            <person name="Hurst L."/>
            <person name="Atkin R."/>
            <person name="Barron A."/>
            <person name="Bason N."/>
            <person name="Bentley S.D."/>
            <person name="Chillingworth C."/>
            <person name="Chillingworth T."/>
            <person name="Churcher C."/>
            <person name="Clark L."/>
            <person name="Corton C."/>
            <person name="Cronin A."/>
            <person name="Doggett J."/>
            <person name="Dowd L."/>
            <person name="Feltwell T."/>
            <person name="Hance Z."/>
            <person name="Harris B."/>
            <person name="Hauser H."/>
            <person name="Holroyd S."/>
            <person name="Jagels K."/>
            <person name="James K.D."/>
            <person name="Lennard N."/>
            <person name="Line A."/>
            <person name="Mayes R."/>
            <person name="Moule S."/>
            <person name="Mungall K."/>
            <person name="Ormond D."/>
            <person name="Quail M.A."/>
            <person name="Rabbinowitsch E."/>
            <person name="Rutherford K.M."/>
            <person name="Sanders M."/>
            <person name="Sharp S."/>
            <person name="Simmonds M."/>
            <person name="Stevens K."/>
            <person name="Whitehead S."/>
            <person name="Barrell B.G."/>
            <person name="Spratt B.G."/>
            <person name="Parkhill J."/>
        </authorList>
    </citation>
    <scope>NUCLEOTIDE SEQUENCE [LARGE SCALE GENOMIC DNA]</scope>
    <source>
        <strain>MRSA252</strain>
    </source>
</reference>
<accession>Q6GJ61</accession>